<protein>
    <recommendedName>
        <fullName evidence="1">Pyridoxine/pyridoxamine 5'-phosphate oxidase</fullName>
        <ecNumber evidence="1">1.4.3.5</ecNumber>
    </recommendedName>
    <alternativeName>
        <fullName evidence="1">PNP/PMP oxidase</fullName>
        <shortName evidence="1">PNPOx</shortName>
    </alternativeName>
    <alternativeName>
        <fullName evidence="1">Pyridoxal 5'-phosphate synthase</fullName>
    </alternativeName>
</protein>
<keyword id="KW-0285">Flavoprotein</keyword>
<keyword id="KW-0288">FMN</keyword>
<keyword id="KW-0560">Oxidoreductase</keyword>
<keyword id="KW-0664">Pyridoxine biosynthesis</keyword>
<gene>
    <name evidence="1" type="primary">pdxH</name>
    <name type="ordered locus">SeAg_B1726</name>
</gene>
<feature type="chain" id="PRO_1000186332" description="Pyridoxine/pyridoxamine 5'-phosphate oxidase">
    <location>
        <begin position="1"/>
        <end position="218"/>
    </location>
</feature>
<feature type="binding site" evidence="1">
    <location>
        <begin position="14"/>
        <end position="17"/>
    </location>
    <ligand>
        <name>substrate</name>
    </ligand>
</feature>
<feature type="binding site" evidence="1">
    <location>
        <begin position="67"/>
        <end position="72"/>
    </location>
    <ligand>
        <name>FMN</name>
        <dbReference type="ChEBI" id="CHEBI:58210"/>
    </ligand>
</feature>
<feature type="binding site" evidence="1">
    <location>
        <position position="72"/>
    </location>
    <ligand>
        <name>substrate</name>
    </ligand>
</feature>
<feature type="binding site" evidence="1">
    <location>
        <begin position="82"/>
        <end position="83"/>
    </location>
    <ligand>
        <name>FMN</name>
        <dbReference type="ChEBI" id="CHEBI:58210"/>
    </ligand>
</feature>
<feature type="binding site" evidence="1">
    <location>
        <position position="88"/>
    </location>
    <ligand>
        <name>FMN</name>
        <dbReference type="ChEBI" id="CHEBI:58210"/>
    </ligand>
</feature>
<feature type="binding site" evidence="1">
    <location>
        <position position="89"/>
    </location>
    <ligand>
        <name>FMN</name>
        <dbReference type="ChEBI" id="CHEBI:58210"/>
    </ligand>
</feature>
<feature type="binding site" evidence="1">
    <location>
        <position position="111"/>
    </location>
    <ligand>
        <name>FMN</name>
        <dbReference type="ChEBI" id="CHEBI:58210"/>
    </ligand>
</feature>
<feature type="binding site" evidence="1">
    <location>
        <position position="129"/>
    </location>
    <ligand>
        <name>substrate</name>
    </ligand>
</feature>
<feature type="binding site" evidence="1">
    <location>
        <position position="133"/>
    </location>
    <ligand>
        <name>substrate</name>
    </ligand>
</feature>
<feature type="binding site" evidence="1">
    <location>
        <position position="137"/>
    </location>
    <ligand>
        <name>substrate</name>
    </ligand>
</feature>
<feature type="binding site" evidence="1">
    <location>
        <begin position="146"/>
        <end position="147"/>
    </location>
    <ligand>
        <name>FMN</name>
        <dbReference type="ChEBI" id="CHEBI:58210"/>
    </ligand>
</feature>
<feature type="binding site" evidence="1">
    <location>
        <position position="191"/>
    </location>
    <ligand>
        <name>FMN</name>
        <dbReference type="ChEBI" id="CHEBI:58210"/>
    </ligand>
</feature>
<feature type="binding site" evidence="1">
    <location>
        <begin position="197"/>
        <end position="199"/>
    </location>
    <ligand>
        <name>substrate</name>
    </ligand>
</feature>
<feature type="binding site" evidence="1">
    <location>
        <position position="201"/>
    </location>
    <ligand>
        <name>FMN</name>
        <dbReference type="ChEBI" id="CHEBI:58210"/>
    </ligand>
</feature>
<evidence type="ECO:0000255" key="1">
    <source>
        <dbReference type="HAMAP-Rule" id="MF_01629"/>
    </source>
</evidence>
<dbReference type="EC" id="1.4.3.5" evidence="1"/>
<dbReference type="EMBL" id="CP001138">
    <property type="protein sequence ID" value="ACH49513.1"/>
    <property type="molecule type" value="Genomic_DNA"/>
</dbReference>
<dbReference type="RefSeq" id="WP_001282334.1">
    <property type="nucleotide sequence ID" value="NC_011149.1"/>
</dbReference>
<dbReference type="SMR" id="B5F6J9"/>
<dbReference type="KEGG" id="sea:SeAg_B1726"/>
<dbReference type="HOGENOM" id="CLU_032263_2_2_6"/>
<dbReference type="UniPathway" id="UPA01068">
    <property type="reaction ID" value="UER00304"/>
</dbReference>
<dbReference type="UniPathway" id="UPA01068">
    <property type="reaction ID" value="UER00305"/>
</dbReference>
<dbReference type="Proteomes" id="UP000008819">
    <property type="component" value="Chromosome"/>
</dbReference>
<dbReference type="GO" id="GO:0010181">
    <property type="term" value="F:FMN binding"/>
    <property type="evidence" value="ECO:0007669"/>
    <property type="project" value="UniProtKB-UniRule"/>
</dbReference>
<dbReference type="GO" id="GO:0004733">
    <property type="term" value="F:pyridoxamine phosphate oxidase activity"/>
    <property type="evidence" value="ECO:0007669"/>
    <property type="project" value="UniProtKB-UniRule"/>
</dbReference>
<dbReference type="GO" id="GO:0008615">
    <property type="term" value="P:pyridoxine biosynthetic process"/>
    <property type="evidence" value="ECO:0007669"/>
    <property type="project" value="UniProtKB-KW"/>
</dbReference>
<dbReference type="FunFam" id="2.30.110.10:FF:000001">
    <property type="entry name" value="Pyridoxine/pyridoxamine 5'-phosphate oxidase"/>
    <property type="match status" value="1"/>
</dbReference>
<dbReference type="Gene3D" id="2.30.110.10">
    <property type="entry name" value="Electron Transport, Fmn-binding Protein, Chain A"/>
    <property type="match status" value="1"/>
</dbReference>
<dbReference type="HAMAP" id="MF_01629">
    <property type="entry name" value="PdxH"/>
    <property type="match status" value="1"/>
</dbReference>
<dbReference type="InterPro" id="IPR000659">
    <property type="entry name" value="Pyridox_Oxase"/>
</dbReference>
<dbReference type="InterPro" id="IPR019740">
    <property type="entry name" value="Pyridox_Oxase_CS"/>
</dbReference>
<dbReference type="InterPro" id="IPR011576">
    <property type="entry name" value="Pyridox_Oxase_N"/>
</dbReference>
<dbReference type="InterPro" id="IPR019576">
    <property type="entry name" value="Pyridoxamine_oxidase_dimer_C"/>
</dbReference>
<dbReference type="InterPro" id="IPR012349">
    <property type="entry name" value="Split_barrel_FMN-bd"/>
</dbReference>
<dbReference type="NCBIfam" id="TIGR00558">
    <property type="entry name" value="pdxH"/>
    <property type="match status" value="1"/>
</dbReference>
<dbReference type="NCBIfam" id="NF004231">
    <property type="entry name" value="PRK05679.1"/>
    <property type="match status" value="1"/>
</dbReference>
<dbReference type="PANTHER" id="PTHR10851:SF0">
    <property type="entry name" value="PYRIDOXINE-5'-PHOSPHATE OXIDASE"/>
    <property type="match status" value="1"/>
</dbReference>
<dbReference type="PANTHER" id="PTHR10851">
    <property type="entry name" value="PYRIDOXINE-5-PHOSPHATE OXIDASE"/>
    <property type="match status" value="1"/>
</dbReference>
<dbReference type="Pfam" id="PF10590">
    <property type="entry name" value="PNP_phzG_C"/>
    <property type="match status" value="1"/>
</dbReference>
<dbReference type="Pfam" id="PF01243">
    <property type="entry name" value="PNPOx_N"/>
    <property type="match status" value="1"/>
</dbReference>
<dbReference type="PIRSF" id="PIRSF000190">
    <property type="entry name" value="Pyd_amn-ph_oxd"/>
    <property type="match status" value="1"/>
</dbReference>
<dbReference type="SUPFAM" id="SSF50475">
    <property type="entry name" value="FMN-binding split barrel"/>
    <property type="match status" value="1"/>
</dbReference>
<dbReference type="PROSITE" id="PS01064">
    <property type="entry name" value="PYRIDOX_OXIDASE"/>
    <property type="match status" value="1"/>
</dbReference>
<sequence length="218" mass="25499">MSDNDQLQQIAHLRREYTKGGLRRRDLPAEPLTLFERWLGQACDARLADPTAMVVATVDDKGQPYQRIVLLKHYDEKGLVFYTNLGSRKAHQIEHNPRISLLFPWHMLERQVMVTGKAERLSTLEVVRYFHSRPRDSQIGAWVSKQSSRISARGILESKFLELKQKFQQGEVPLPSFWGGFRVSIEQMEFWQGGEHRLHDRFLYQRDDGAWKIDRLAP</sequence>
<proteinExistence type="inferred from homology"/>
<organism>
    <name type="scientific">Salmonella agona (strain SL483)</name>
    <dbReference type="NCBI Taxonomy" id="454166"/>
    <lineage>
        <taxon>Bacteria</taxon>
        <taxon>Pseudomonadati</taxon>
        <taxon>Pseudomonadota</taxon>
        <taxon>Gammaproteobacteria</taxon>
        <taxon>Enterobacterales</taxon>
        <taxon>Enterobacteriaceae</taxon>
        <taxon>Salmonella</taxon>
    </lineage>
</organism>
<comment type="function">
    <text evidence="1">Catalyzes the oxidation of either pyridoxine 5'-phosphate (PNP) or pyridoxamine 5'-phosphate (PMP) into pyridoxal 5'-phosphate (PLP).</text>
</comment>
<comment type="catalytic activity">
    <reaction evidence="1">
        <text>pyridoxamine 5'-phosphate + O2 + H2O = pyridoxal 5'-phosphate + H2O2 + NH4(+)</text>
        <dbReference type="Rhea" id="RHEA:15817"/>
        <dbReference type="ChEBI" id="CHEBI:15377"/>
        <dbReference type="ChEBI" id="CHEBI:15379"/>
        <dbReference type="ChEBI" id="CHEBI:16240"/>
        <dbReference type="ChEBI" id="CHEBI:28938"/>
        <dbReference type="ChEBI" id="CHEBI:58451"/>
        <dbReference type="ChEBI" id="CHEBI:597326"/>
        <dbReference type="EC" id="1.4.3.5"/>
    </reaction>
</comment>
<comment type="catalytic activity">
    <reaction evidence="1">
        <text>pyridoxine 5'-phosphate + O2 = pyridoxal 5'-phosphate + H2O2</text>
        <dbReference type="Rhea" id="RHEA:15149"/>
        <dbReference type="ChEBI" id="CHEBI:15379"/>
        <dbReference type="ChEBI" id="CHEBI:16240"/>
        <dbReference type="ChEBI" id="CHEBI:58589"/>
        <dbReference type="ChEBI" id="CHEBI:597326"/>
        <dbReference type="EC" id="1.4.3.5"/>
    </reaction>
</comment>
<comment type="cofactor">
    <cofactor evidence="1">
        <name>FMN</name>
        <dbReference type="ChEBI" id="CHEBI:58210"/>
    </cofactor>
    <text evidence="1">Binds 1 FMN per subunit.</text>
</comment>
<comment type="pathway">
    <text evidence="1">Cofactor metabolism; pyridoxal 5'-phosphate salvage; pyridoxal 5'-phosphate from pyridoxamine 5'-phosphate: step 1/1.</text>
</comment>
<comment type="pathway">
    <text evidence="1">Cofactor metabolism; pyridoxal 5'-phosphate salvage; pyridoxal 5'-phosphate from pyridoxine 5'-phosphate: step 1/1.</text>
</comment>
<comment type="subunit">
    <text evidence="1">Homodimer.</text>
</comment>
<comment type="similarity">
    <text evidence="1">Belongs to the pyridoxamine 5'-phosphate oxidase family.</text>
</comment>
<reference key="1">
    <citation type="journal article" date="2011" name="J. Bacteriol.">
        <title>Comparative genomics of 28 Salmonella enterica isolates: evidence for CRISPR-mediated adaptive sublineage evolution.</title>
        <authorList>
            <person name="Fricke W.F."/>
            <person name="Mammel M.K."/>
            <person name="McDermott P.F."/>
            <person name="Tartera C."/>
            <person name="White D.G."/>
            <person name="Leclerc J.E."/>
            <person name="Ravel J."/>
            <person name="Cebula T.A."/>
        </authorList>
    </citation>
    <scope>NUCLEOTIDE SEQUENCE [LARGE SCALE GENOMIC DNA]</scope>
    <source>
        <strain>SL483</strain>
    </source>
</reference>
<name>PDXH_SALA4</name>
<accession>B5F6J9</accession>